<keyword id="KW-0489">Methyltransferase</keyword>
<keyword id="KW-0949">S-adenosyl-L-methionine</keyword>
<keyword id="KW-0808">Transferase</keyword>
<comment type="function">
    <text evidence="1">S-adenosyl-L-methionine-dependent methyltransferase that catalyzes the trimethylation of the amino group of the modified target histidine residue in translation elongation factor 2 (EF-2), to form an intermediate called diphthine. The three successive methylation reactions represent the second step of diphthamide biosynthesis.</text>
</comment>
<comment type="catalytic activity">
    <reaction evidence="1">
        <text>2-[(3S)-amino-3-carboxypropyl]-L-histidyl-[translation elongation factor 2] + 3 S-adenosyl-L-methionine = diphthine-[translation elongation factor 2] + 3 S-adenosyl-L-homocysteine + 3 H(+)</text>
        <dbReference type="Rhea" id="RHEA:36415"/>
        <dbReference type="Rhea" id="RHEA-COMP:9749"/>
        <dbReference type="Rhea" id="RHEA-COMP:10172"/>
        <dbReference type="ChEBI" id="CHEBI:15378"/>
        <dbReference type="ChEBI" id="CHEBI:57856"/>
        <dbReference type="ChEBI" id="CHEBI:59789"/>
        <dbReference type="ChEBI" id="CHEBI:73995"/>
        <dbReference type="ChEBI" id="CHEBI:82696"/>
        <dbReference type="EC" id="2.1.1.98"/>
    </reaction>
</comment>
<comment type="pathway">
    <text evidence="1">Protein modification; peptidyl-diphthamide biosynthesis.</text>
</comment>
<comment type="subunit">
    <text evidence="1">Homodimer.</text>
</comment>
<comment type="similarity">
    <text evidence="1">Belongs to the diphthine synthase family.</text>
</comment>
<accession>C3MPQ5</accession>
<feature type="chain" id="PRO_1000213522" description="Diphthine synthase">
    <location>
        <begin position="1"/>
        <end position="257"/>
    </location>
</feature>
<feature type="binding site" evidence="1">
    <location>
        <position position="11"/>
    </location>
    <ligand>
        <name>S-adenosyl-L-methionine</name>
        <dbReference type="ChEBI" id="CHEBI:59789"/>
    </ligand>
</feature>
<feature type="binding site" evidence="1">
    <location>
        <position position="89"/>
    </location>
    <ligand>
        <name>S-adenosyl-L-methionine</name>
        <dbReference type="ChEBI" id="CHEBI:59789"/>
    </ligand>
</feature>
<feature type="binding site" evidence="1">
    <location>
        <position position="92"/>
    </location>
    <ligand>
        <name>S-adenosyl-L-methionine</name>
        <dbReference type="ChEBI" id="CHEBI:59789"/>
    </ligand>
</feature>
<feature type="binding site" evidence="1">
    <location>
        <begin position="117"/>
        <end position="118"/>
    </location>
    <ligand>
        <name>S-adenosyl-L-methionine</name>
        <dbReference type="ChEBI" id="CHEBI:59789"/>
    </ligand>
</feature>
<feature type="binding site" evidence="1">
    <location>
        <position position="169"/>
    </location>
    <ligand>
        <name>S-adenosyl-L-methionine</name>
        <dbReference type="ChEBI" id="CHEBI:59789"/>
    </ligand>
</feature>
<feature type="binding site" evidence="1">
    <location>
        <position position="210"/>
    </location>
    <ligand>
        <name>S-adenosyl-L-methionine</name>
        <dbReference type="ChEBI" id="CHEBI:59789"/>
    </ligand>
</feature>
<feature type="binding site" evidence="1">
    <location>
        <position position="235"/>
    </location>
    <ligand>
        <name>S-adenosyl-L-methionine</name>
        <dbReference type="ChEBI" id="CHEBI:59789"/>
    </ligand>
</feature>
<evidence type="ECO:0000255" key="1">
    <source>
        <dbReference type="HAMAP-Rule" id="MF_01084"/>
    </source>
</evidence>
<gene>
    <name evidence="1" type="primary">dphB</name>
    <name type="ordered locus">LS215_1360</name>
</gene>
<protein>
    <recommendedName>
        <fullName evidence="1">Diphthine synthase</fullName>
        <ecNumber evidence="1">2.1.1.98</ecNumber>
    </recommendedName>
    <alternativeName>
        <fullName evidence="1">Diphthamide biosynthesis methyltransferase</fullName>
    </alternativeName>
</protein>
<dbReference type="EC" id="2.1.1.98" evidence="1"/>
<dbReference type="EMBL" id="CP001399">
    <property type="protein sequence ID" value="ACP35368.1"/>
    <property type="molecule type" value="Genomic_DNA"/>
</dbReference>
<dbReference type="SMR" id="C3MPQ5"/>
<dbReference type="KEGG" id="sis:LS215_1360"/>
<dbReference type="HOGENOM" id="CLU_066040_0_0_2"/>
<dbReference type="OrthoDB" id="39139at2157"/>
<dbReference type="UniPathway" id="UPA00559"/>
<dbReference type="Proteomes" id="UP000001747">
    <property type="component" value="Chromosome"/>
</dbReference>
<dbReference type="GO" id="GO:0004164">
    <property type="term" value="F:diphthine synthase activity"/>
    <property type="evidence" value="ECO:0007669"/>
    <property type="project" value="UniProtKB-UniRule"/>
</dbReference>
<dbReference type="GO" id="GO:0032259">
    <property type="term" value="P:methylation"/>
    <property type="evidence" value="ECO:0007669"/>
    <property type="project" value="UniProtKB-KW"/>
</dbReference>
<dbReference type="GO" id="GO:0017183">
    <property type="term" value="P:protein histidyl modification to diphthamide"/>
    <property type="evidence" value="ECO:0007669"/>
    <property type="project" value="UniProtKB-UniRule"/>
</dbReference>
<dbReference type="CDD" id="cd11647">
    <property type="entry name" value="DHP5_DphB"/>
    <property type="match status" value="1"/>
</dbReference>
<dbReference type="Gene3D" id="3.40.1010.10">
    <property type="entry name" value="Cobalt-precorrin-4 Transmethylase, Domain 1"/>
    <property type="match status" value="1"/>
</dbReference>
<dbReference type="Gene3D" id="3.30.950.10">
    <property type="entry name" value="Methyltransferase, Cobalt-precorrin-4 Transmethylase, Domain 2"/>
    <property type="match status" value="1"/>
</dbReference>
<dbReference type="HAMAP" id="MF_01084">
    <property type="entry name" value="Diphthine_synth"/>
    <property type="match status" value="1"/>
</dbReference>
<dbReference type="InterPro" id="IPR000878">
    <property type="entry name" value="4pyrrol_Mease"/>
</dbReference>
<dbReference type="InterPro" id="IPR035996">
    <property type="entry name" value="4pyrrol_Methylase_sf"/>
</dbReference>
<dbReference type="InterPro" id="IPR014777">
    <property type="entry name" value="4pyrrole_Mease_sub1"/>
</dbReference>
<dbReference type="InterPro" id="IPR014776">
    <property type="entry name" value="4pyrrole_Mease_sub2"/>
</dbReference>
<dbReference type="InterPro" id="IPR004551">
    <property type="entry name" value="Dphthn_synthase"/>
</dbReference>
<dbReference type="NCBIfam" id="TIGR00522">
    <property type="entry name" value="dph5"/>
    <property type="match status" value="1"/>
</dbReference>
<dbReference type="PANTHER" id="PTHR10882:SF0">
    <property type="entry name" value="DIPHTHINE METHYL ESTER SYNTHASE"/>
    <property type="match status" value="1"/>
</dbReference>
<dbReference type="PANTHER" id="PTHR10882">
    <property type="entry name" value="DIPHTHINE SYNTHASE"/>
    <property type="match status" value="1"/>
</dbReference>
<dbReference type="Pfam" id="PF00590">
    <property type="entry name" value="TP_methylase"/>
    <property type="match status" value="1"/>
</dbReference>
<dbReference type="PIRSF" id="PIRSF036432">
    <property type="entry name" value="Diphthine_synth"/>
    <property type="match status" value="1"/>
</dbReference>
<dbReference type="SUPFAM" id="SSF53790">
    <property type="entry name" value="Tetrapyrrole methylase"/>
    <property type="match status" value="1"/>
</dbReference>
<name>DPHB_SACI2</name>
<reference key="1">
    <citation type="journal article" date="2009" name="Proc. Natl. Acad. Sci. U.S.A.">
        <title>Biogeography of the Sulfolobus islandicus pan-genome.</title>
        <authorList>
            <person name="Reno M.L."/>
            <person name="Held N.L."/>
            <person name="Fields C.J."/>
            <person name="Burke P.V."/>
            <person name="Whitaker R.J."/>
        </authorList>
    </citation>
    <scope>NUCLEOTIDE SEQUENCE [LARGE SCALE GENOMIC DNA]</scope>
    <source>
        <strain>L.S.2.15 / Lassen #1</strain>
    </source>
</reference>
<organism>
    <name type="scientific">Saccharolobus islandicus (strain L.S.2.15 / Lassen #1)</name>
    <name type="common">Sulfolobus islandicus</name>
    <dbReference type="NCBI Taxonomy" id="429572"/>
    <lineage>
        <taxon>Archaea</taxon>
        <taxon>Thermoproteota</taxon>
        <taxon>Thermoprotei</taxon>
        <taxon>Sulfolobales</taxon>
        <taxon>Sulfolobaceae</taxon>
        <taxon>Saccharolobus</taxon>
    </lineage>
</organism>
<proteinExistence type="inferred from homology"/>
<sequence length="257" mass="28757">MSILSLVGLGISKKFITENAIDTLNNSDIIIFDKYTSRSCDINVDVLRRLVKGGKTLIEADRSLLENNSKIIMDYLDKNYNVSIASIGDVLIATTHVSLLIEAKQRGHNVKVIPGISVHCYLISKSLLSSYKFGKSVTVTFPYNDFIDPTPYNVIKDNKERGLHTILYLDLKSEKAMTANEALQILLRLEDKHRKNVLSKSDIVIVGARLGCDDEKIVALTVEEATLYDFGNTPHIIIIPGNLHYMEADAIKWMLMS</sequence>